<sequence length="207" mass="22279">MANVKLFDQTGKEAGEVVLNDAIFGIEPNESVVFDVIISQRASLRQGTHAVKNRSAVSGGGRKPWRQKGTGRARQGSIRSPQWRGGGVVFGPTPRSYAYKLPRKVRRLALKSVYSEKVAENKFVAVDSLSFTAPKTAEFAKVLAALSIDTKVLVILEEGNEFAALSARNLPNVKVATATTASVLDIVNSDKLLVTQAAISKIEEVLA</sequence>
<dbReference type="EMBL" id="CP000725">
    <property type="protein sequence ID" value="ABV09307.1"/>
    <property type="molecule type" value="Genomic_DNA"/>
</dbReference>
<dbReference type="RefSeq" id="WP_008809909.1">
    <property type="nucleotide sequence ID" value="NC_009785.1"/>
</dbReference>
<dbReference type="SMR" id="A8AZM4"/>
<dbReference type="STRING" id="467705.SGO_1984"/>
<dbReference type="GeneID" id="93786843"/>
<dbReference type="KEGG" id="sgo:SGO_1984"/>
<dbReference type="eggNOG" id="COG0088">
    <property type="taxonomic scope" value="Bacteria"/>
</dbReference>
<dbReference type="HOGENOM" id="CLU_041575_5_2_9"/>
<dbReference type="Proteomes" id="UP000001131">
    <property type="component" value="Chromosome"/>
</dbReference>
<dbReference type="GO" id="GO:1990904">
    <property type="term" value="C:ribonucleoprotein complex"/>
    <property type="evidence" value="ECO:0007669"/>
    <property type="project" value="UniProtKB-KW"/>
</dbReference>
<dbReference type="GO" id="GO:0005840">
    <property type="term" value="C:ribosome"/>
    <property type="evidence" value="ECO:0007669"/>
    <property type="project" value="UniProtKB-KW"/>
</dbReference>
<dbReference type="GO" id="GO:0019843">
    <property type="term" value="F:rRNA binding"/>
    <property type="evidence" value="ECO:0007669"/>
    <property type="project" value="UniProtKB-UniRule"/>
</dbReference>
<dbReference type="GO" id="GO:0003735">
    <property type="term" value="F:structural constituent of ribosome"/>
    <property type="evidence" value="ECO:0007669"/>
    <property type="project" value="InterPro"/>
</dbReference>
<dbReference type="GO" id="GO:0006412">
    <property type="term" value="P:translation"/>
    <property type="evidence" value="ECO:0007669"/>
    <property type="project" value="UniProtKB-UniRule"/>
</dbReference>
<dbReference type="FunFam" id="3.40.1370.10:FF:000003">
    <property type="entry name" value="50S ribosomal protein L4"/>
    <property type="match status" value="1"/>
</dbReference>
<dbReference type="Gene3D" id="3.40.1370.10">
    <property type="match status" value="1"/>
</dbReference>
<dbReference type="HAMAP" id="MF_01328_B">
    <property type="entry name" value="Ribosomal_uL4_B"/>
    <property type="match status" value="1"/>
</dbReference>
<dbReference type="InterPro" id="IPR002136">
    <property type="entry name" value="Ribosomal_uL4"/>
</dbReference>
<dbReference type="InterPro" id="IPR013005">
    <property type="entry name" value="Ribosomal_uL4-like"/>
</dbReference>
<dbReference type="InterPro" id="IPR023574">
    <property type="entry name" value="Ribosomal_uL4_dom_sf"/>
</dbReference>
<dbReference type="NCBIfam" id="TIGR03953">
    <property type="entry name" value="rplD_bact"/>
    <property type="match status" value="1"/>
</dbReference>
<dbReference type="PANTHER" id="PTHR10746">
    <property type="entry name" value="50S RIBOSOMAL PROTEIN L4"/>
    <property type="match status" value="1"/>
</dbReference>
<dbReference type="PANTHER" id="PTHR10746:SF6">
    <property type="entry name" value="LARGE RIBOSOMAL SUBUNIT PROTEIN UL4M"/>
    <property type="match status" value="1"/>
</dbReference>
<dbReference type="Pfam" id="PF00573">
    <property type="entry name" value="Ribosomal_L4"/>
    <property type="match status" value="1"/>
</dbReference>
<dbReference type="SUPFAM" id="SSF52166">
    <property type="entry name" value="Ribosomal protein L4"/>
    <property type="match status" value="1"/>
</dbReference>
<comment type="function">
    <text evidence="1">One of the primary rRNA binding proteins, this protein initially binds near the 5'-end of the 23S rRNA. It is important during the early stages of 50S assembly. It makes multiple contacts with different domains of the 23S rRNA in the assembled 50S subunit and ribosome.</text>
</comment>
<comment type="function">
    <text evidence="1">Forms part of the polypeptide exit tunnel.</text>
</comment>
<comment type="subunit">
    <text evidence="1">Part of the 50S ribosomal subunit.</text>
</comment>
<comment type="similarity">
    <text evidence="1">Belongs to the universal ribosomal protein uL4 family.</text>
</comment>
<proteinExistence type="inferred from homology"/>
<organism>
    <name type="scientific">Streptococcus gordonii (strain Challis / ATCC 35105 / BCRC 15272 / CH1 / DL1 / V288)</name>
    <dbReference type="NCBI Taxonomy" id="467705"/>
    <lineage>
        <taxon>Bacteria</taxon>
        <taxon>Bacillati</taxon>
        <taxon>Bacillota</taxon>
        <taxon>Bacilli</taxon>
        <taxon>Lactobacillales</taxon>
        <taxon>Streptococcaceae</taxon>
        <taxon>Streptococcus</taxon>
    </lineage>
</organism>
<protein>
    <recommendedName>
        <fullName evidence="1">Large ribosomal subunit protein uL4</fullName>
    </recommendedName>
    <alternativeName>
        <fullName evidence="3">50S ribosomal protein L4</fullName>
    </alternativeName>
</protein>
<name>RL4_STRGC</name>
<accession>A8AZM4</accession>
<reference key="1">
    <citation type="journal article" date="2007" name="J. Bacteriol.">
        <title>Genome-wide transcriptional changes in Streptococcus gordonii in response to competence signaling peptide.</title>
        <authorList>
            <person name="Vickerman M.M."/>
            <person name="Iobst S."/>
            <person name="Jesionowski A.M."/>
            <person name="Gill S.R."/>
        </authorList>
    </citation>
    <scope>NUCLEOTIDE SEQUENCE [LARGE SCALE GENOMIC DNA]</scope>
    <source>
        <strain>Challis / ATCC 35105 / BCRC 15272 / CH1 / DL1 / V288</strain>
    </source>
</reference>
<feature type="chain" id="PRO_1000086541" description="Large ribosomal subunit protein uL4">
    <location>
        <begin position="1"/>
        <end position="207"/>
    </location>
</feature>
<feature type="region of interest" description="Disordered" evidence="2">
    <location>
        <begin position="49"/>
        <end position="78"/>
    </location>
</feature>
<keyword id="KW-1185">Reference proteome</keyword>
<keyword id="KW-0687">Ribonucleoprotein</keyword>
<keyword id="KW-0689">Ribosomal protein</keyword>
<keyword id="KW-0694">RNA-binding</keyword>
<keyword id="KW-0699">rRNA-binding</keyword>
<gene>
    <name evidence="1" type="primary">rplD</name>
    <name type="ordered locus">SGO_1984</name>
</gene>
<evidence type="ECO:0000255" key="1">
    <source>
        <dbReference type="HAMAP-Rule" id="MF_01328"/>
    </source>
</evidence>
<evidence type="ECO:0000256" key="2">
    <source>
        <dbReference type="SAM" id="MobiDB-lite"/>
    </source>
</evidence>
<evidence type="ECO:0000305" key="3"/>